<name>UTP25_KOMPG</name>
<evidence type="ECO:0000250" key="1"/>
<evidence type="ECO:0000256" key="2">
    <source>
        <dbReference type="SAM" id="MobiDB-lite"/>
    </source>
</evidence>
<evidence type="ECO:0000305" key="3"/>
<feature type="chain" id="PRO_0000408133" description="U3 small nucleolar RNA-associated protein 25">
    <location>
        <begin position="1"/>
        <end position="697"/>
    </location>
</feature>
<feature type="region of interest" description="Disordered" evidence="2">
    <location>
        <begin position="1"/>
        <end position="128"/>
    </location>
</feature>
<feature type="compositionally biased region" description="Polar residues" evidence="2">
    <location>
        <begin position="35"/>
        <end position="50"/>
    </location>
</feature>
<feature type="compositionally biased region" description="Acidic residues" evidence="2">
    <location>
        <begin position="51"/>
        <end position="68"/>
    </location>
</feature>
<feature type="compositionally biased region" description="Basic and acidic residues" evidence="2">
    <location>
        <begin position="89"/>
        <end position="104"/>
    </location>
</feature>
<feature type="compositionally biased region" description="Acidic residues" evidence="2">
    <location>
        <begin position="105"/>
        <end position="128"/>
    </location>
</feature>
<gene>
    <name type="primary">UTP25</name>
    <name type="ordered locus">PAS_chr2-2_0196</name>
</gene>
<proteinExistence type="inferred from homology"/>
<organism>
    <name type="scientific">Komagataella phaffii (strain GS115 / ATCC 20864)</name>
    <name type="common">Yeast</name>
    <name type="synonym">Pichia pastoris</name>
    <dbReference type="NCBI Taxonomy" id="644223"/>
    <lineage>
        <taxon>Eukaryota</taxon>
        <taxon>Fungi</taxon>
        <taxon>Dikarya</taxon>
        <taxon>Ascomycota</taxon>
        <taxon>Saccharomycotina</taxon>
        <taxon>Pichiomycetes</taxon>
        <taxon>Pichiales</taxon>
        <taxon>Pichiaceae</taxon>
        <taxon>Komagataella</taxon>
    </lineage>
</organism>
<reference key="1">
    <citation type="journal article" date="2009" name="Nat. Biotechnol.">
        <title>Genome sequence of the recombinant protein production host Pichia pastoris.</title>
        <authorList>
            <person name="De Schutter K."/>
            <person name="Lin Y.-C."/>
            <person name="Tiels P."/>
            <person name="Van Hecke A."/>
            <person name="Glinka S."/>
            <person name="Weber-Lehmann J."/>
            <person name="Rouze P."/>
            <person name="Van de Peer Y."/>
            <person name="Callewaert N."/>
        </authorList>
    </citation>
    <scope>NUCLEOTIDE SEQUENCE [LARGE SCALE GENOMIC DNA]</scope>
    <source>
        <strain>GS115 / ATCC 20864</strain>
    </source>
</reference>
<dbReference type="EMBL" id="FN392320">
    <property type="protein sequence ID" value="CAY69724.1"/>
    <property type="molecule type" value="Genomic_DNA"/>
</dbReference>
<dbReference type="RefSeq" id="XP_002492004.1">
    <property type="nucleotide sequence ID" value="XM_002491959.1"/>
</dbReference>
<dbReference type="FunCoup" id="C4R2K0">
    <property type="interactions" value="1285"/>
</dbReference>
<dbReference type="STRING" id="644223.C4R2K0"/>
<dbReference type="EnsemblFungi" id="CAY69724">
    <property type="protein sequence ID" value="CAY69724"/>
    <property type="gene ID" value="PAS_chr2-2_0196"/>
</dbReference>
<dbReference type="GeneID" id="8198771"/>
<dbReference type="KEGG" id="ppa:PAS_chr2-2_0196"/>
<dbReference type="eggNOG" id="KOG2340">
    <property type="taxonomic scope" value="Eukaryota"/>
</dbReference>
<dbReference type="HOGENOM" id="CLU_018705_0_1_1"/>
<dbReference type="InParanoid" id="C4R2K0"/>
<dbReference type="OMA" id="GIMIFIP"/>
<dbReference type="OrthoDB" id="10264378at2759"/>
<dbReference type="Proteomes" id="UP000000314">
    <property type="component" value="Chromosome 2"/>
</dbReference>
<dbReference type="GO" id="GO:0005730">
    <property type="term" value="C:nucleolus"/>
    <property type="evidence" value="ECO:0007669"/>
    <property type="project" value="UniProtKB-SubCell"/>
</dbReference>
<dbReference type="GO" id="GO:0032040">
    <property type="term" value="C:small-subunit processome"/>
    <property type="evidence" value="ECO:0007669"/>
    <property type="project" value="TreeGrafter"/>
</dbReference>
<dbReference type="GO" id="GO:0019843">
    <property type="term" value="F:rRNA binding"/>
    <property type="evidence" value="ECO:0007669"/>
    <property type="project" value="TreeGrafter"/>
</dbReference>
<dbReference type="GO" id="GO:0034511">
    <property type="term" value="F:U3 snoRNA binding"/>
    <property type="evidence" value="ECO:0007669"/>
    <property type="project" value="InterPro"/>
</dbReference>
<dbReference type="GO" id="GO:0000462">
    <property type="term" value="P:maturation of SSU-rRNA from tricistronic rRNA transcript (SSU-rRNA, 5.8S rRNA, LSU-rRNA)"/>
    <property type="evidence" value="ECO:0007669"/>
    <property type="project" value="TreeGrafter"/>
</dbReference>
<dbReference type="Gene3D" id="3.40.50.300">
    <property type="entry name" value="P-loop containing nucleotide triphosphate hydrolases"/>
    <property type="match status" value="1"/>
</dbReference>
<dbReference type="InterPro" id="IPR027417">
    <property type="entry name" value="P-loop_NTPase"/>
</dbReference>
<dbReference type="InterPro" id="IPR010678">
    <property type="entry name" value="UTP25"/>
</dbReference>
<dbReference type="InterPro" id="IPR053939">
    <property type="entry name" value="UTP25_C"/>
</dbReference>
<dbReference type="InterPro" id="IPR053940">
    <property type="entry name" value="UTP25_NTPase-like"/>
</dbReference>
<dbReference type="PANTHER" id="PTHR12933">
    <property type="entry name" value="ORF PROTEIN-RELATED"/>
    <property type="match status" value="1"/>
</dbReference>
<dbReference type="PANTHER" id="PTHR12933:SF0">
    <property type="entry name" value="U3 SMALL NUCLEOLAR RNA-ASSOCIATED PROTEIN 25 HOMOLOG"/>
    <property type="match status" value="1"/>
</dbReference>
<dbReference type="Pfam" id="PF06862">
    <property type="entry name" value="Utp25_C"/>
    <property type="match status" value="1"/>
</dbReference>
<dbReference type="Pfam" id="PF22916">
    <property type="entry name" value="UTP25_NTPase-like"/>
    <property type="match status" value="1"/>
</dbReference>
<dbReference type="SUPFAM" id="SSF52540">
    <property type="entry name" value="P-loop containing nucleoside triphosphate hydrolases"/>
    <property type="match status" value="2"/>
</dbReference>
<accession>C4R2K0</accession>
<comment type="function">
    <text evidence="1">DEAD-box RNA helicase-like protein required for pre-18S rRNA processing, specifically at sites A0, A1, and A2.</text>
</comment>
<comment type="subunit">
    <text evidence="1">Component of the ribosomal small subunit (SSU) processome composed of at least 40 protein subunits and snoRNA U3.</text>
</comment>
<comment type="subcellular location">
    <subcellularLocation>
        <location evidence="1">Nucleus</location>
        <location evidence="1">Nucleolus</location>
    </subcellularLocation>
</comment>
<comment type="similarity">
    <text evidence="3">Belongs to the UTP25 family.</text>
</comment>
<protein>
    <recommendedName>
        <fullName>U3 small nucleolar RNA-associated protein 25</fullName>
        <shortName>U3 snoRNA-associated protein 25</shortName>
    </recommendedName>
    <alternativeName>
        <fullName>U three protein 25</fullName>
    </alternativeName>
</protein>
<keyword id="KW-0539">Nucleus</keyword>
<keyword id="KW-1185">Reference proteome</keyword>
<keyword id="KW-0687">Ribonucleoprotein</keyword>
<keyword id="KW-0690">Ribosome biogenesis</keyword>
<keyword id="KW-0698">rRNA processing</keyword>
<sequence length="697" mass="82513">MTEANSNRNRSKHARSHYGREELRTVRSVKRRTGGKNNYSKFTPMDNNESIVEESEDEGEEEDDEQEDPQPSSMAYDALLTLLDDESDHEQFHAEKEKALKKLEEEQEREEEELQEEDEDEDEEDEEINLEDFESDDESHDDPFHFHFNEEESIDRMINEYESSGLKVKMDRKVNHNGYNILEYLPSTSRCLNEVKTLDKLRIKKKLRDQFSSLDFKDELDKKLTLDIFNYKNINYQYYTRETDYQSLYLLHALNHLLKTRDRIFDHNNKISADPNLEFKDQGYTRPKILILLPTRNFCFNLMNKLIKLADIKTVENKKRFNTQFYSDFKIETLNGNKPKDFNEFFRGNSSDFFTLGVKFTRKSMKIYSMLKQSDIIFASPLGLKMLLDKEKNDYLSSIEVTILDKADGLLMQNWDHVKQIFTKSLIQAPKNFEELNCDFSRIRMWCINDQAKYVHQVLSFSKYTTPELNNIVKAPNLQGYALYKPIIDDTNNVMNQLNYQLFQSRIINKNIRLNHMFMRFPSSSPMESPKKRLNFFTKVILPNVLTKSPYTSGTLVYISSYLDYIQVKKHLSESRSEFLAVDEYTSLSASSKNRSLFEKGKYPIMLYTERMHFYKRYNLNGVRNVVFYNLPTDPDFYAQVVRQIVRNKLKDEELDLNLCSIKVMFDRFDTLKLEKIVGLKRASLLVNAEQEVFEFK</sequence>